<keyword id="KW-0963">Cytoplasm</keyword>
<keyword id="KW-0378">Hydrolase</keyword>
<keyword id="KW-0694">RNA-binding</keyword>
<keyword id="KW-0820">tRNA-binding</keyword>
<gene>
    <name evidence="1" type="primary">pth</name>
    <name type="ordered locus">SaurJH9_0524</name>
</gene>
<organism>
    <name type="scientific">Staphylococcus aureus (strain JH9)</name>
    <dbReference type="NCBI Taxonomy" id="359786"/>
    <lineage>
        <taxon>Bacteria</taxon>
        <taxon>Bacillati</taxon>
        <taxon>Bacillota</taxon>
        <taxon>Bacilli</taxon>
        <taxon>Bacillales</taxon>
        <taxon>Staphylococcaceae</taxon>
        <taxon>Staphylococcus</taxon>
    </lineage>
</organism>
<protein>
    <recommendedName>
        <fullName evidence="1">Peptidyl-tRNA hydrolase</fullName>
        <shortName evidence="1">Pth</shortName>
        <ecNumber evidence="1">3.1.1.29</ecNumber>
    </recommendedName>
</protein>
<accession>A5IQ55</accession>
<sequence length="190" mass="21703">MKCIVGLGNIGKRFELTRHNIGFEVVDYILEKNNFSLDKQKFKGAYTIERMNGDKVLFIEPMTMMNLSGEAVAPIMDYYNVNPEDLIVLYDDLDLEQGQVRLRQKGSAGGHNGMKSIIKMLGTDQFKRIRIGVGRPTNGMTVPDYVLQRFSNDEMVTMEKVIEHAARAIEKFVETSRFDHVMNEFNGEVK</sequence>
<feature type="chain" id="PRO_1000075360" description="Peptidyl-tRNA hydrolase">
    <location>
        <begin position="1"/>
        <end position="190"/>
    </location>
</feature>
<feature type="active site" description="Proton acceptor" evidence="1">
    <location>
        <position position="19"/>
    </location>
</feature>
<feature type="binding site" evidence="1">
    <location>
        <position position="14"/>
    </location>
    <ligand>
        <name>tRNA</name>
        <dbReference type="ChEBI" id="CHEBI:17843"/>
    </ligand>
</feature>
<feature type="binding site" evidence="1">
    <location>
        <position position="64"/>
    </location>
    <ligand>
        <name>tRNA</name>
        <dbReference type="ChEBI" id="CHEBI:17843"/>
    </ligand>
</feature>
<feature type="binding site" evidence="1">
    <location>
        <position position="66"/>
    </location>
    <ligand>
        <name>tRNA</name>
        <dbReference type="ChEBI" id="CHEBI:17843"/>
    </ligand>
</feature>
<feature type="binding site" evidence="1">
    <location>
        <position position="112"/>
    </location>
    <ligand>
        <name>tRNA</name>
        <dbReference type="ChEBI" id="CHEBI:17843"/>
    </ligand>
</feature>
<feature type="site" description="Discriminates between blocked and unblocked aminoacyl-tRNA" evidence="1">
    <location>
        <position position="9"/>
    </location>
</feature>
<feature type="site" description="Stabilizes the basic form of H active site to accept a proton" evidence="1">
    <location>
        <position position="91"/>
    </location>
</feature>
<proteinExistence type="inferred from homology"/>
<reference key="1">
    <citation type="submission" date="2007-05" db="EMBL/GenBank/DDBJ databases">
        <title>Complete sequence of chromosome of Staphylococcus aureus subsp. aureus JH9.</title>
        <authorList>
            <consortium name="US DOE Joint Genome Institute"/>
            <person name="Copeland A."/>
            <person name="Lucas S."/>
            <person name="Lapidus A."/>
            <person name="Barry K."/>
            <person name="Detter J.C."/>
            <person name="Glavina del Rio T."/>
            <person name="Hammon N."/>
            <person name="Israni S."/>
            <person name="Pitluck S."/>
            <person name="Chain P."/>
            <person name="Malfatti S."/>
            <person name="Shin M."/>
            <person name="Vergez L."/>
            <person name="Schmutz J."/>
            <person name="Larimer F."/>
            <person name="Land M."/>
            <person name="Hauser L."/>
            <person name="Kyrpides N."/>
            <person name="Kim E."/>
            <person name="Tomasz A."/>
            <person name="Richardson P."/>
        </authorList>
    </citation>
    <scope>NUCLEOTIDE SEQUENCE [LARGE SCALE GENOMIC DNA]</scope>
    <source>
        <strain>JH9</strain>
    </source>
</reference>
<dbReference type="EC" id="3.1.1.29" evidence="1"/>
<dbReference type="EMBL" id="CP000703">
    <property type="protein sequence ID" value="ABQ48328.1"/>
    <property type="molecule type" value="Genomic_DNA"/>
</dbReference>
<dbReference type="RefSeq" id="WP_000649791.1">
    <property type="nucleotide sequence ID" value="NC_009487.1"/>
</dbReference>
<dbReference type="SMR" id="A5IQ55"/>
<dbReference type="KEGG" id="saj:SaurJH9_0524"/>
<dbReference type="HOGENOM" id="CLU_062456_4_1_9"/>
<dbReference type="GO" id="GO:0005737">
    <property type="term" value="C:cytoplasm"/>
    <property type="evidence" value="ECO:0007669"/>
    <property type="project" value="UniProtKB-SubCell"/>
</dbReference>
<dbReference type="GO" id="GO:0004045">
    <property type="term" value="F:peptidyl-tRNA hydrolase activity"/>
    <property type="evidence" value="ECO:0007669"/>
    <property type="project" value="UniProtKB-UniRule"/>
</dbReference>
<dbReference type="GO" id="GO:0000049">
    <property type="term" value="F:tRNA binding"/>
    <property type="evidence" value="ECO:0007669"/>
    <property type="project" value="UniProtKB-UniRule"/>
</dbReference>
<dbReference type="GO" id="GO:0006515">
    <property type="term" value="P:protein quality control for misfolded or incompletely synthesized proteins"/>
    <property type="evidence" value="ECO:0007669"/>
    <property type="project" value="UniProtKB-UniRule"/>
</dbReference>
<dbReference type="GO" id="GO:0072344">
    <property type="term" value="P:rescue of stalled ribosome"/>
    <property type="evidence" value="ECO:0007669"/>
    <property type="project" value="UniProtKB-UniRule"/>
</dbReference>
<dbReference type="CDD" id="cd00462">
    <property type="entry name" value="PTH"/>
    <property type="match status" value="1"/>
</dbReference>
<dbReference type="FunFam" id="3.40.50.1470:FF:000001">
    <property type="entry name" value="Peptidyl-tRNA hydrolase"/>
    <property type="match status" value="1"/>
</dbReference>
<dbReference type="Gene3D" id="3.40.50.1470">
    <property type="entry name" value="Peptidyl-tRNA hydrolase"/>
    <property type="match status" value="1"/>
</dbReference>
<dbReference type="HAMAP" id="MF_00083">
    <property type="entry name" value="Pept_tRNA_hydro_bact"/>
    <property type="match status" value="1"/>
</dbReference>
<dbReference type="InterPro" id="IPR001328">
    <property type="entry name" value="Pept_tRNA_hydro"/>
</dbReference>
<dbReference type="InterPro" id="IPR018171">
    <property type="entry name" value="Pept_tRNA_hydro_CS"/>
</dbReference>
<dbReference type="InterPro" id="IPR036416">
    <property type="entry name" value="Pept_tRNA_hydro_sf"/>
</dbReference>
<dbReference type="NCBIfam" id="TIGR00447">
    <property type="entry name" value="pth"/>
    <property type="match status" value="1"/>
</dbReference>
<dbReference type="PANTHER" id="PTHR17224">
    <property type="entry name" value="PEPTIDYL-TRNA HYDROLASE"/>
    <property type="match status" value="1"/>
</dbReference>
<dbReference type="PANTHER" id="PTHR17224:SF1">
    <property type="entry name" value="PEPTIDYL-TRNA HYDROLASE"/>
    <property type="match status" value="1"/>
</dbReference>
<dbReference type="Pfam" id="PF01195">
    <property type="entry name" value="Pept_tRNA_hydro"/>
    <property type="match status" value="1"/>
</dbReference>
<dbReference type="SUPFAM" id="SSF53178">
    <property type="entry name" value="Peptidyl-tRNA hydrolase-like"/>
    <property type="match status" value="1"/>
</dbReference>
<dbReference type="PROSITE" id="PS01195">
    <property type="entry name" value="PEPT_TRNA_HYDROL_1"/>
    <property type="match status" value="1"/>
</dbReference>
<dbReference type="PROSITE" id="PS01196">
    <property type="entry name" value="PEPT_TRNA_HYDROL_2"/>
    <property type="match status" value="1"/>
</dbReference>
<evidence type="ECO:0000255" key="1">
    <source>
        <dbReference type="HAMAP-Rule" id="MF_00083"/>
    </source>
</evidence>
<name>PTH_STAA9</name>
<comment type="function">
    <text evidence="1">Hydrolyzes ribosome-free peptidyl-tRNAs (with 1 or more amino acids incorporated), which drop off the ribosome during protein synthesis, or as a result of ribosome stalling.</text>
</comment>
<comment type="function">
    <text evidence="1">Catalyzes the release of premature peptidyl moieties from peptidyl-tRNA molecules trapped in stalled 50S ribosomal subunits, and thus maintains levels of free tRNAs and 50S ribosomes.</text>
</comment>
<comment type="catalytic activity">
    <reaction evidence="1">
        <text>an N-acyl-L-alpha-aminoacyl-tRNA + H2O = an N-acyl-L-amino acid + a tRNA + H(+)</text>
        <dbReference type="Rhea" id="RHEA:54448"/>
        <dbReference type="Rhea" id="RHEA-COMP:10123"/>
        <dbReference type="Rhea" id="RHEA-COMP:13883"/>
        <dbReference type="ChEBI" id="CHEBI:15377"/>
        <dbReference type="ChEBI" id="CHEBI:15378"/>
        <dbReference type="ChEBI" id="CHEBI:59874"/>
        <dbReference type="ChEBI" id="CHEBI:78442"/>
        <dbReference type="ChEBI" id="CHEBI:138191"/>
        <dbReference type="EC" id="3.1.1.29"/>
    </reaction>
</comment>
<comment type="subunit">
    <text evidence="1">Monomer.</text>
</comment>
<comment type="subcellular location">
    <subcellularLocation>
        <location evidence="1">Cytoplasm</location>
    </subcellularLocation>
</comment>
<comment type="similarity">
    <text evidence="1">Belongs to the PTH family.</text>
</comment>